<name>PTHM_ORYSJ</name>
<evidence type="ECO:0000250" key="1"/>
<evidence type="ECO:0000250" key="2">
    <source>
        <dbReference type="UniProtKB" id="P0A7D1"/>
    </source>
</evidence>
<evidence type="ECO:0000255" key="3"/>
<evidence type="ECO:0000305" key="4"/>
<evidence type="ECO:0000312" key="5">
    <source>
        <dbReference type="EMBL" id="EEE55225.1"/>
    </source>
</evidence>
<sequence>MRLLSGASASRIPCPLLSLARARARCLPVPASATACRAASSSAAAAAGDGGALKPWLFVGLGNPGKVYQGTRHNVGFEMIDVIAEAEGISLSSMQFKAMVGKGRIGDAPIMLAKPQTFMNASGESVGQLVSYFKIPLNQVLVMYDDLDLPFAKLRLLPKGGHGGHNGVRSIINHLKQNRDFPRLRIGIGRPPGKMDPANFVLRPFNRKEQEELDFAFHRGLEAVRIMALEGFNKSATYVNTAQSSEMLNR</sequence>
<organism>
    <name type="scientific">Oryza sativa subsp. japonica</name>
    <name type="common">Rice</name>
    <dbReference type="NCBI Taxonomy" id="39947"/>
    <lineage>
        <taxon>Eukaryota</taxon>
        <taxon>Viridiplantae</taxon>
        <taxon>Streptophyta</taxon>
        <taxon>Embryophyta</taxon>
        <taxon>Tracheophyta</taxon>
        <taxon>Spermatophyta</taxon>
        <taxon>Magnoliopsida</taxon>
        <taxon>Liliopsida</taxon>
        <taxon>Poales</taxon>
        <taxon>Poaceae</taxon>
        <taxon>BOP clade</taxon>
        <taxon>Oryzoideae</taxon>
        <taxon>Oryzeae</taxon>
        <taxon>Oryzinae</taxon>
        <taxon>Oryza</taxon>
        <taxon>Oryza sativa</taxon>
    </lineage>
</organism>
<gene>
    <name type="ordered locus">Os01g0693900</name>
    <name type="ordered locus">LOC_Os01g49900</name>
    <name evidence="5" type="ORF">OsJ_03102</name>
    <name type="ORF">P0431H09.8</name>
</gene>
<reference key="1">
    <citation type="journal article" date="2002" name="Nature">
        <title>The genome sequence and structure of rice chromosome 1.</title>
        <authorList>
            <person name="Sasaki T."/>
            <person name="Matsumoto T."/>
            <person name="Yamamoto K."/>
            <person name="Sakata K."/>
            <person name="Baba T."/>
            <person name="Katayose Y."/>
            <person name="Wu J."/>
            <person name="Niimura Y."/>
            <person name="Cheng Z."/>
            <person name="Nagamura Y."/>
            <person name="Antonio B.A."/>
            <person name="Kanamori H."/>
            <person name="Hosokawa S."/>
            <person name="Masukawa M."/>
            <person name="Arikawa K."/>
            <person name="Chiden Y."/>
            <person name="Hayashi M."/>
            <person name="Okamoto M."/>
            <person name="Ando T."/>
            <person name="Aoki H."/>
            <person name="Arita K."/>
            <person name="Hamada M."/>
            <person name="Harada C."/>
            <person name="Hijishita S."/>
            <person name="Honda M."/>
            <person name="Ichikawa Y."/>
            <person name="Idonuma A."/>
            <person name="Iijima M."/>
            <person name="Ikeda M."/>
            <person name="Ikeno M."/>
            <person name="Ito S."/>
            <person name="Ito T."/>
            <person name="Ito Y."/>
            <person name="Ito Y."/>
            <person name="Iwabuchi A."/>
            <person name="Kamiya K."/>
            <person name="Karasawa W."/>
            <person name="Katagiri S."/>
            <person name="Kikuta A."/>
            <person name="Kobayashi N."/>
            <person name="Kono I."/>
            <person name="Machita K."/>
            <person name="Maehara T."/>
            <person name="Mizuno H."/>
            <person name="Mizubayashi T."/>
            <person name="Mukai Y."/>
            <person name="Nagasaki H."/>
            <person name="Nakashima M."/>
            <person name="Nakama Y."/>
            <person name="Nakamichi Y."/>
            <person name="Nakamura M."/>
            <person name="Namiki N."/>
            <person name="Negishi M."/>
            <person name="Ohta I."/>
            <person name="Ono N."/>
            <person name="Saji S."/>
            <person name="Sakai K."/>
            <person name="Shibata M."/>
            <person name="Shimokawa T."/>
            <person name="Shomura A."/>
            <person name="Song J."/>
            <person name="Takazaki Y."/>
            <person name="Terasawa K."/>
            <person name="Tsuji K."/>
            <person name="Waki K."/>
            <person name="Yamagata H."/>
            <person name="Yamane H."/>
            <person name="Yoshiki S."/>
            <person name="Yoshihara R."/>
            <person name="Yukawa K."/>
            <person name="Zhong H."/>
            <person name="Iwama H."/>
            <person name="Endo T."/>
            <person name="Ito H."/>
            <person name="Hahn J.H."/>
            <person name="Kim H.-I."/>
            <person name="Eun M.-Y."/>
            <person name="Yano M."/>
            <person name="Jiang J."/>
            <person name="Gojobori T."/>
        </authorList>
    </citation>
    <scope>NUCLEOTIDE SEQUENCE [LARGE SCALE GENOMIC DNA]</scope>
    <source>
        <strain>cv. Nipponbare</strain>
    </source>
</reference>
<reference key="2">
    <citation type="journal article" date="2005" name="Nature">
        <title>The map-based sequence of the rice genome.</title>
        <authorList>
            <consortium name="International rice genome sequencing project (IRGSP)"/>
        </authorList>
    </citation>
    <scope>NUCLEOTIDE SEQUENCE [LARGE SCALE GENOMIC DNA]</scope>
    <source>
        <strain>cv. Nipponbare</strain>
    </source>
</reference>
<reference key="3">
    <citation type="journal article" date="2008" name="Nucleic Acids Res.">
        <title>The rice annotation project database (RAP-DB): 2008 update.</title>
        <authorList>
            <consortium name="The rice annotation project (RAP)"/>
        </authorList>
    </citation>
    <scope>GENOME REANNOTATION</scope>
    <source>
        <strain>cv. Nipponbare</strain>
    </source>
</reference>
<reference key="4">
    <citation type="journal article" date="2013" name="Rice">
        <title>Improvement of the Oryza sativa Nipponbare reference genome using next generation sequence and optical map data.</title>
        <authorList>
            <person name="Kawahara Y."/>
            <person name="de la Bastide M."/>
            <person name="Hamilton J.P."/>
            <person name="Kanamori H."/>
            <person name="McCombie W.R."/>
            <person name="Ouyang S."/>
            <person name="Schwartz D.C."/>
            <person name="Tanaka T."/>
            <person name="Wu J."/>
            <person name="Zhou S."/>
            <person name="Childs K.L."/>
            <person name="Davidson R.M."/>
            <person name="Lin H."/>
            <person name="Quesada-Ocampo L."/>
            <person name="Vaillancourt B."/>
            <person name="Sakai H."/>
            <person name="Lee S.S."/>
            <person name="Kim J."/>
            <person name="Numa H."/>
            <person name="Itoh T."/>
            <person name="Buell C.R."/>
            <person name="Matsumoto T."/>
        </authorList>
    </citation>
    <scope>GENOME REANNOTATION</scope>
    <source>
        <strain>cv. Nipponbare</strain>
    </source>
</reference>
<reference key="5">
    <citation type="journal article" date="2005" name="PLoS Biol.">
        <title>The genomes of Oryza sativa: a history of duplications.</title>
        <authorList>
            <person name="Yu J."/>
            <person name="Wang J."/>
            <person name="Lin W."/>
            <person name="Li S."/>
            <person name="Li H."/>
            <person name="Zhou J."/>
            <person name="Ni P."/>
            <person name="Dong W."/>
            <person name="Hu S."/>
            <person name="Zeng C."/>
            <person name="Zhang J."/>
            <person name="Zhang Y."/>
            <person name="Li R."/>
            <person name="Xu Z."/>
            <person name="Li S."/>
            <person name="Li X."/>
            <person name="Zheng H."/>
            <person name="Cong L."/>
            <person name="Lin L."/>
            <person name="Yin J."/>
            <person name="Geng J."/>
            <person name="Li G."/>
            <person name="Shi J."/>
            <person name="Liu J."/>
            <person name="Lv H."/>
            <person name="Li J."/>
            <person name="Wang J."/>
            <person name="Deng Y."/>
            <person name="Ran L."/>
            <person name="Shi X."/>
            <person name="Wang X."/>
            <person name="Wu Q."/>
            <person name="Li C."/>
            <person name="Ren X."/>
            <person name="Wang J."/>
            <person name="Wang X."/>
            <person name="Li D."/>
            <person name="Liu D."/>
            <person name="Zhang X."/>
            <person name="Ji Z."/>
            <person name="Zhao W."/>
            <person name="Sun Y."/>
            <person name="Zhang Z."/>
            <person name="Bao J."/>
            <person name="Han Y."/>
            <person name="Dong L."/>
            <person name="Ji J."/>
            <person name="Chen P."/>
            <person name="Wu S."/>
            <person name="Liu J."/>
            <person name="Xiao Y."/>
            <person name="Bu D."/>
            <person name="Tan J."/>
            <person name="Yang L."/>
            <person name="Ye C."/>
            <person name="Zhang J."/>
            <person name="Xu J."/>
            <person name="Zhou Y."/>
            <person name="Yu Y."/>
            <person name="Zhang B."/>
            <person name="Zhuang S."/>
            <person name="Wei H."/>
            <person name="Liu B."/>
            <person name="Lei M."/>
            <person name="Yu H."/>
            <person name="Li Y."/>
            <person name="Xu H."/>
            <person name="Wei S."/>
            <person name="He X."/>
            <person name="Fang L."/>
            <person name="Zhang Z."/>
            <person name="Zhang Y."/>
            <person name="Huang X."/>
            <person name="Su Z."/>
            <person name="Tong W."/>
            <person name="Li J."/>
            <person name="Tong Z."/>
            <person name="Li S."/>
            <person name="Ye J."/>
            <person name="Wang L."/>
            <person name="Fang L."/>
            <person name="Lei T."/>
            <person name="Chen C.-S."/>
            <person name="Chen H.-C."/>
            <person name="Xu Z."/>
            <person name="Li H."/>
            <person name="Huang H."/>
            <person name="Zhang F."/>
            <person name="Xu H."/>
            <person name="Li N."/>
            <person name="Zhao C."/>
            <person name="Li S."/>
            <person name="Dong L."/>
            <person name="Huang Y."/>
            <person name="Li L."/>
            <person name="Xi Y."/>
            <person name="Qi Q."/>
            <person name="Li W."/>
            <person name="Zhang B."/>
            <person name="Hu W."/>
            <person name="Zhang Y."/>
            <person name="Tian X."/>
            <person name="Jiao Y."/>
            <person name="Liang X."/>
            <person name="Jin J."/>
            <person name="Gao L."/>
            <person name="Zheng W."/>
            <person name="Hao B."/>
            <person name="Liu S.-M."/>
            <person name="Wang W."/>
            <person name="Yuan L."/>
            <person name="Cao M."/>
            <person name="McDermott J."/>
            <person name="Samudrala R."/>
            <person name="Wang J."/>
            <person name="Wong G.K.-S."/>
            <person name="Yang H."/>
        </authorList>
    </citation>
    <scope>NUCLEOTIDE SEQUENCE [LARGE SCALE GENOMIC DNA]</scope>
    <source>
        <strain>cv. Nipponbare</strain>
    </source>
</reference>
<reference key="6">
    <citation type="journal article" date="2003" name="Science">
        <title>Collection, mapping, and annotation of over 28,000 cDNA clones from japonica rice.</title>
        <authorList>
            <consortium name="The rice full-length cDNA consortium"/>
        </authorList>
    </citation>
    <scope>NUCLEOTIDE SEQUENCE [LARGE SCALE MRNA]</scope>
    <source>
        <strain>cv. Nipponbare</strain>
    </source>
</reference>
<accession>Q5N9Q7</accession>
<accession>B7EPP3</accession>
<feature type="transit peptide" description="Mitochondrion" evidence="3">
    <location>
        <begin position="1"/>
        <end position="45"/>
    </location>
</feature>
<feature type="chain" id="PRO_0000280529" description="Peptidyl-tRNA hydrolase, mitochondrial">
    <location>
        <begin position="46"/>
        <end position="250"/>
    </location>
</feature>
<feature type="active site" description="Proton acceptor" evidence="2">
    <location>
        <position position="73"/>
    </location>
</feature>
<feature type="binding site" evidence="2">
    <location>
        <position position="68"/>
    </location>
    <ligand>
        <name>tRNA</name>
        <dbReference type="ChEBI" id="CHEBI:17843"/>
    </ligand>
</feature>
<feature type="binding site" evidence="2">
    <location>
        <position position="118"/>
    </location>
    <ligand>
        <name>tRNA</name>
        <dbReference type="ChEBI" id="CHEBI:17843"/>
    </ligand>
</feature>
<feature type="binding site" evidence="2">
    <location>
        <position position="120"/>
    </location>
    <ligand>
        <name>tRNA</name>
        <dbReference type="ChEBI" id="CHEBI:17843"/>
    </ligand>
</feature>
<feature type="binding site" evidence="2">
    <location>
        <position position="166"/>
    </location>
    <ligand>
        <name>tRNA</name>
        <dbReference type="ChEBI" id="CHEBI:17843"/>
    </ligand>
</feature>
<feature type="site" description="Stabilizes the basic form of H active site to accept a proton" evidence="2">
    <location>
        <position position="145"/>
    </location>
</feature>
<feature type="sequence conflict" description="In Ref. 6; AK066034." evidence="4" ref="6">
    <original>R</original>
    <variation>L</variation>
    <location>
        <position position="72"/>
    </location>
</feature>
<feature type="sequence conflict" description="In Ref. 6; AK066034." evidence="4" ref="6">
    <original>E</original>
    <variation>V</variation>
    <location>
        <position position="230"/>
    </location>
</feature>
<protein>
    <recommendedName>
        <fullName>Peptidyl-tRNA hydrolase, mitochondrial</fullName>
        <ecNumber>3.1.1.29</ecNumber>
    </recommendedName>
    <alternativeName>
        <fullName>M-PTH</fullName>
    </alternativeName>
</protein>
<dbReference type="EC" id="3.1.1.29"/>
<dbReference type="EMBL" id="AP003248">
    <property type="protein sequence ID" value="BAD81799.1"/>
    <property type="molecule type" value="Genomic_DNA"/>
</dbReference>
<dbReference type="EMBL" id="AP008207">
    <property type="protein sequence ID" value="BAF05862.1"/>
    <property type="molecule type" value="Genomic_DNA"/>
</dbReference>
<dbReference type="EMBL" id="AP014957">
    <property type="protein sequence ID" value="BAS73831.1"/>
    <property type="molecule type" value="Genomic_DNA"/>
</dbReference>
<dbReference type="EMBL" id="CM000138">
    <property type="protein sequence ID" value="EEE55225.1"/>
    <property type="molecule type" value="Genomic_DNA"/>
</dbReference>
<dbReference type="EMBL" id="AK066034">
    <property type="status" value="NOT_ANNOTATED_CDS"/>
    <property type="molecule type" value="mRNA"/>
</dbReference>
<dbReference type="EMBL" id="AK099894">
    <property type="protein sequence ID" value="BAG94340.1"/>
    <property type="molecule type" value="mRNA"/>
</dbReference>
<dbReference type="RefSeq" id="XP_015626738.1">
    <property type="nucleotide sequence ID" value="XM_015771252.1"/>
</dbReference>
<dbReference type="SMR" id="Q5N9Q7"/>
<dbReference type="FunCoup" id="Q5N9Q7">
    <property type="interactions" value="298"/>
</dbReference>
<dbReference type="STRING" id="39947.Q5N9Q7"/>
<dbReference type="PaxDb" id="39947-Q5N9Q7"/>
<dbReference type="EnsemblPlants" id="Os01t0693900-01">
    <property type="protein sequence ID" value="Os01t0693900-01"/>
    <property type="gene ID" value="Os01g0693900"/>
</dbReference>
<dbReference type="EnsemblPlants" id="Os01t0693900-02">
    <property type="protein sequence ID" value="Os01t0693900-02"/>
    <property type="gene ID" value="Os01g0693900"/>
</dbReference>
<dbReference type="Gramene" id="Os01t0693900-01">
    <property type="protein sequence ID" value="Os01t0693900-01"/>
    <property type="gene ID" value="Os01g0693900"/>
</dbReference>
<dbReference type="Gramene" id="Os01t0693900-02">
    <property type="protein sequence ID" value="Os01t0693900-02"/>
    <property type="gene ID" value="Os01g0693900"/>
</dbReference>
<dbReference type="KEGG" id="dosa:Os01g0693900"/>
<dbReference type="eggNOG" id="KOG2255">
    <property type="taxonomic scope" value="Eukaryota"/>
</dbReference>
<dbReference type="HOGENOM" id="CLU_062456_5_0_1"/>
<dbReference type="InParanoid" id="Q5N9Q7"/>
<dbReference type="OMA" id="HDELQVP"/>
<dbReference type="OrthoDB" id="1711136at2759"/>
<dbReference type="Proteomes" id="UP000000763">
    <property type="component" value="Chromosome 1"/>
</dbReference>
<dbReference type="Proteomes" id="UP000007752">
    <property type="component" value="Chromosome 1"/>
</dbReference>
<dbReference type="Proteomes" id="UP000059680">
    <property type="component" value="Chromosome 1"/>
</dbReference>
<dbReference type="GO" id="GO:0005739">
    <property type="term" value="C:mitochondrion"/>
    <property type="evidence" value="ECO:0007669"/>
    <property type="project" value="UniProtKB-SubCell"/>
</dbReference>
<dbReference type="GO" id="GO:0004045">
    <property type="term" value="F:peptidyl-tRNA hydrolase activity"/>
    <property type="evidence" value="ECO:0000318"/>
    <property type="project" value="GO_Central"/>
</dbReference>
<dbReference type="GO" id="GO:0000049">
    <property type="term" value="F:tRNA binding"/>
    <property type="evidence" value="ECO:0007669"/>
    <property type="project" value="UniProtKB-KW"/>
</dbReference>
<dbReference type="FunFam" id="3.40.50.1470:FF:000001">
    <property type="entry name" value="Peptidyl-tRNA hydrolase"/>
    <property type="match status" value="1"/>
</dbReference>
<dbReference type="Gene3D" id="3.40.50.1470">
    <property type="entry name" value="Peptidyl-tRNA hydrolase"/>
    <property type="match status" value="1"/>
</dbReference>
<dbReference type="HAMAP" id="MF_00083">
    <property type="entry name" value="Pept_tRNA_hydro_bact"/>
    <property type="match status" value="1"/>
</dbReference>
<dbReference type="InterPro" id="IPR001328">
    <property type="entry name" value="Pept_tRNA_hydro"/>
</dbReference>
<dbReference type="InterPro" id="IPR018171">
    <property type="entry name" value="Pept_tRNA_hydro_CS"/>
</dbReference>
<dbReference type="InterPro" id="IPR036416">
    <property type="entry name" value="Pept_tRNA_hydro_sf"/>
</dbReference>
<dbReference type="NCBIfam" id="TIGR00447">
    <property type="entry name" value="pth"/>
    <property type="match status" value="1"/>
</dbReference>
<dbReference type="PANTHER" id="PTHR17224">
    <property type="entry name" value="PEPTIDYL-TRNA HYDROLASE"/>
    <property type="match status" value="1"/>
</dbReference>
<dbReference type="PANTHER" id="PTHR17224:SF1">
    <property type="entry name" value="PEPTIDYL-TRNA HYDROLASE"/>
    <property type="match status" value="1"/>
</dbReference>
<dbReference type="Pfam" id="PF01195">
    <property type="entry name" value="Pept_tRNA_hydro"/>
    <property type="match status" value="1"/>
</dbReference>
<dbReference type="SUPFAM" id="SSF53178">
    <property type="entry name" value="Peptidyl-tRNA hydrolase-like"/>
    <property type="match status" value="1"/>
</dbReference>
<dbReference type="PROSITE" id="PS01195">
    <property type="entry name" value="PEPT_TRNA_HYDROL_1"/>
    <property type="match status" value="1"/>
</dbReference>
<dbReference type="PROSITE" id="PS01196">
    <property type="entry name" value="PEPT_TRNA_HYDROL_2"/>
    <property type="match status" value="1"/>
</dbReference>
<comment type="function">
    <text evidence="1">The natural substrate for this enzyme may be peptidyl-tRNAs which drop off the ribosome during protein synthesis.</text>
</comment>
<comment type="catalytic activity">
    <reaction>
        <text>an N-acyl-L-alpha-aminoacyl-tRNA + H2O = an N-acyl-L-amino acid + a tRNA + H(+)</text>
        <dbReference type="Rhea" id="RHEA:54448"/>
        <dbReference type="Rhea" id="RHEA-COMP:10123"/>
        <dbReference type="Rhea" id="RHEA-COMP:13883"/>
        <dbReference type="ChEBI" id="CHEBI:15377"/>
        <dbReference type="ChEBI" id="CHEBI:15378"/>
        <dbReference type="ChEBI" id="CHEBI:59874"/>
        <dbReference type="ChEBI" id="CHEBI:78442"/>
        <dbReference type="ChEBI" id="CHEBI:138191"/>
        <dbReference type="EC" id="3.1.1.29"/>
    </reaction>
</comment>
<comment type="subcellular location">
    <subcellularLocation>
        <location evidence="4">Mitochondrion</location>
    </subcellularLocation>
</comment>
<comment type="similarity">
    <text evidence="4">Belongs to the PTH family.</text>
</comment>
<keyword id="KW-0378">Hydrolase</keyword>
<keyword id="KW-0496">Mitochondrion</keyword>
<keyword id="KW-1185">Reference proteome</keyword>
<keyword id="KW-0694">RNA-binding</keyword>
<keyword id="KW-0809">Transit peptide</keyword>
<keyword id="KW-0820">tRNA-binding</keyword>
<proteinExistence type="evidence at transcript level"/>